<reference key="1">
    <citation type="journal article" date="2007" name="Genome Biol.">
        <title>Characterization and modeling of the Haemophilus influenzae core and supragenomes based on the complete genomic sequences of Rd and 12 clinical nontypeable strains.</title>
        <authorList>
            <person name="Hogg J.S."/>
            <person name="Hu F.Z."/>
            <person name="Janto B."/>
            <person name="Boissy R."/>
            <person name="Hayes J."/>
            <person name="Keefe R."/>
            <person name="Post J.C."/>
            <person name="Ehrlich G.D."/>
        </authorList>
    </citation>
    <scope>NUCLEOTIDE SEQUENCE [LARGE SCALE GENOMIC DNA]</scope>
    <source>
        <strain>PittEE</strain>
    </source>
</reference>
<evidence type="ECO:0000255" key="1">
    <source>
        <dbReference type="HAMAP-Rule" id="MF_00822"/>
    </source>
</evidence>
<evidence type="ECO:0000256" key="2">
    <source>
        <dbReference type="SAM" id="MobiDB-lite"/>
    </source>
</evidence>
<sequence length="185" mass="21079">MKIINPILPIIENILGNLTALQAEGKITTQPIERVALQWYESERNILRKTTNTGREVAFRLLKEGQRLKHDDVVFISDELVIAIEILPSDVIVLSPKTLPEMARACYEIGNKHSPLFLDGDEVILPYDKPMFEWLQAAGFHPQKAERRLSQALRANSAQGHGHSHSHSHDHHGYHHHGDGHWHKH</sequence>
<protein>
    <recommendedName>
        <fullName evidence="1">Urease accessory protein UreE</fullName>
    </recommendedName>
</protein>
<comment type="function">
    <text evidence="1">Involved in urease metallocenter assembly. Binds nickel. Probably functions as a nickel donor during metallocenter assembly.</text>
</comment>
<comment type="subcellular location">
    <subcellularLocation>
        <location evidence="1">Cytoplasm</location>
    </subcellularLocation>
</comment>
<comment type="similarity">
    <text evidence="1">Belongs to the UreE family.</text>
</comment>
<feature type="chain" id="PRO_1000062545" description="Urease accessory protein UreE">
    <location>
        <begin position="1"/>
        <end position="185"/>
    </location>
</feature>
<feature type="region of interest" description="Disordered" evidence="2">
    <location>
        <begin position="153"/>
        <end position="185"/>
    </location>
</feature>
<feature type="compositionally biased region" description="Basic residues" evidence="2">
    <location>
        <begin position="162"/>
        <end position="175"/>
    </location>
</feature>
<feature type="compositionally biased region" description="Basic and acidic residues" evidence="2">
    <location>
        <begin position="176"/>
        <end position="185"/>
    </location>
</feature>
<keyword id="KW-0143">Chaperone</keyword>
<keyword id="KW-0963">Cytoplasm</keyword>
<keyword id="KW-0533">Nickel</keyword>
<keyword id="KW-0996">Nickel insertion</keyword>
<gene>
    <name evidence="1" type="primary">ureE</name>
    <name type="ordered locus">CGSHiEE_00300</name>
</gene>
<name>UREE_HAEIE</name>
<accession>A5U9V7</accession>
<organism>
    <name type="scientific">Haemophilus influenzae (strain PittEE)</name>
    <dbReference type="NCBI Taxonomy" id="374930"/>
    <lineage>
        <taxon>Bacteria</taxon>
        <taxon>Pseudomonadati</taxon>
        <taxon>Pseudomonadota</taxon>
        <taxon>Gammaproteobacteria</taxon>
        <taxon>Pasteurellales</taxon>
        <taxon>Pasteurellaceae</taxon>
        <taxon>Haemophilus</taxon>
    </lineage>
</organism>
<dbReference type="EMBL" id="CP000671">
    <property type="protein sequence ID" value="ABQ97558.1"/>
    <property type="molecule type" value="Genomic_DNA"/>
</dbReference>
<dbReference type="SMR" id="A5U9V7"/>
<dbReference type="KEGG" id="hip:CGSHiEE_00300"/>
<dbReference type="HOGENOM" id="CLU_093757_3_0_6"/>
<dbReference type="GO" id="GO:0005737">
    <property type="term" value="C:cytoplasm"/>
    <property type="evidence" value="ECO:0007669"/>
    <property type="project" value="UniProtKB-SubCell"/>
</dbReference>
<dbReference type="GO" id="GO:0016151">
    <property type="term" value="F:nickel cation binding"/>
    <property type="evidence" value="ECO:0007669"/>
    <property type="project" value="UniProtKB-UniRule"/>
</dbReference>
<dbReference type="GO" id="GO:0051082">
    <property type="term" value="F:unfolded protein binding"/>
    <property type="evidence" value="ECO:0007669"/>
    <property type="project" value="UniProtKB-UniRule"/>
</dbReference>
<dbReference type="GO" id="GO:0006457">
    <property type="term" value="P:protein folding"/>
    <property type="evidence" value="ECO:0007669"/>
    <property type="project" value="InterPro"/>
</dbReference>
<dbReference type="GO" id="GO:0065003">
    <property type="term" value="P:protein-containing complex assembly"/>
    <property type="evidence" value="ECO:0007669"/>
    <property type="project" value="InterPro"/>
</dbReference>
<dbReference type="GO" id="GO:0019627">
    <property type="term" value="P:urea metabolic process"/>
    <property type="evidence" value="ECO:0007669"/>
    <property type="project" value="InterPro"/>
</dbReference>
<dbReference type="CDD" id="cd00571">
    <property type="entry name" value="UreE"/>
    <property type="match status" value="1"/>
</dbReference>
<dbReference type="Gene3D" id="2.60.260.20">
    <property type="entry name" value="Urease metallochaperone UreE, N-terminal domain"/>
    <property type="match status" value="1"/>
</dbReference>
<dbReference type="Gene3D" id="3.30.70.790">
    <property type="entry name" value="UreE, C-terminal domain"/>
    <property type="match status" value="1"/>
</dbReference>
<dbReference type="HAMAP" id="MF_00822">
    <property type="entry name" value="UreE"/>
    <property type="match status" value="1"/>
</dbReference>
<dbReference type="InterPro" id="IPR012406">
    <property type="entry name" value="UreE"/>
</dbReference>
<dbReference type="InterPro" id="IPR007864">
    <property type="entry name" value="UreE_C_dom"/>
</dbReference>
<dbReference type="InterPro" id="IPR004029">
    <property type="entry name" value="UreE_N"/>
</dbReference>
<dbReference type="InterPro" id="IPR036118">
    <property type="entry name" value="UreE_N_sf"/>
</dbReference>
<dbReference type="NCBIfam" id="NF009754">
    <property type="entry name" value="PRK13261.1-6"/>
    <property type="match status" value="1"/>
</dbReference>
<dbReference type="Pfam" id="PF05194">
    <property type="entry name" value="UreE_C"/>
    <property type="match status" value="1"/>
</dbReference>
<dbReference type="Pfam" id="PF02814">
    <property type="entry name" value="UreE_N"/>
    <property type="match status" value="1"/>
</dbReference>
<dbReference type="PIRSF" id="PIRSF036402">
    <property type="entry name" value="Ureas_acces_UreE"/>
    <property type="match status" value="1"/>
</dbReference>
<dbReference type="SMART" id="SM00988">
    <property type="entry name" value="UreE_N"/>
    <property type="match status" value="1"/>
</dbReference>
<dbReference type="SUPFAM" id="SSF69737">
    <property type="entry name" value="Urease metallochaperone UreE, C-terminal domain"/>
    <property type="match status" value="1"/>
</dbReference>
<dbReference type="SUPFAM" id="SSF69287">
    <property type="entry name" value="Urease metallochaperone UreE, N-terminal domain"/>
    <property type="match status" value="1"/>
</dbReference>
<proteinExistence type="inferred from homology"/>